<gene>
    <name evidence="1" type="primary">prfB</name>
    <name type="ordered locus">LBJ_0528</name>
</gene>
<name>RF2_LEPBJ</name>
<feature type="chain" id="PRO_1000004994" description="Peptide chain release factor 2">
    <location>
        <begin position="1"/>
        <end position="367"/>
    </location>
</feature>
<feature type="modified residue" description="N5-methylglutamine" evidence="1">
    <location>
        <position position="254"/>
    </location>
</feature>
<organism>
    <name type="scientific">Leptospira borgpetersenii serovar Hardjo-bovis (strain JB197)</name>
    <dbReference type="NCBI Taxonomy" id="355277"/>
    <lineage>
        <taxon>Bacteria</taxon>
        <taxon>Pseudomonadati</taxon>
        <taxon>Spirochaetota</taxon>
        <taxon>Spirochaetia</taxon>
        <taxon>Leptospirales</taxon>
        <taxon>Leptospiraceae</taxon>
        <taxon>Leptospira</taxon>
    </lineage>
</organism>
<proteinExistence type="inferred from homology"/>
<protein>
    <recommendedName>
        <fullName evidence="1">Peptide chain release factor 2</fullName>
        <shortName evidence="1">RF-2</shortName>
    </recommendedName>
</protein>
<keyword id="KW-0963">Cytoplasm</keyword>
<keyword id="KW-0488">Methylation</keyword>
<keyword id="KW-0648">Protein biosynthesis</keyword>
<accession>Q04V47</accession>
<sequence length="367" mass="42150">MEVKSAKELKRVSKELQENFLNRWKLLNLEQDKDRLKALNEKSEDPDLWNNPEEARIVSQKKNELEKKLTPWFTIQQDILDFPDLVELTLDEKGENGIGELSMEYNRLQEKFEELELLGALKNSEDLKPAFLNIHPGAGGTESQDWAEMLLRMYIRYFEKKGYQYSLIDIQAGDGAGIKNVTLHVVGDFAFGFLKGENGIHRLVRISPFDANKRRHTSFVSVHVSPEIDDEIDIKIEEKDIRVDVYRSSGAGGQHVNTTDSAVRITHLPSGIVVACQNERSQIKNRDTAFKMLKARLYEMEQEKAKEELEKKSGEKKDIAWGSQIRSYVFHPYNLVKDHRTDHETGNVAAVMDGDIEPFILAYLKTL</sequence>
<evidence type="ECO:0000255" key="1">
    <source>
        <dbReference type="HAMAP-Rule" id="MF_00094"/>
    </source>
</evidence>
<comment type="function">
    <text evidence="1">Peptide chain release factor 2 directs the termination of translation in response to the peptide chain termination codons UGA and UAA.</text>
</comment>
<comment type="subcellular location">
    <subcellularLocation>
        <location evidence="1">Cytoplasm</location>
    </subcellularLocation>
</comment>
<comment type="PTM">
    <text evidence="1">Methylated by PrmC. Methylation increases the termination efficiency of RF2.</text>
</comment>
<comment type="similarity">
    <text evidence="1">Belongs to the prokaryotic/mitochondrial release factor family.</text>
</comment>
<dbReference type="EMBL" id="CP000350">
    <property type="protein sequence ID" value="ABJ75223.1"/>
    <property type="molecule type" value="Genomic_DNA"/>
</dbReference>
<dbReference type="RefSeq" id="WP_011670880.1">
    <property type="nucleotide sequence ID" value="NC_008510.1"/>
</dbReference>
<dbReference type="SMR" id="Q04V47"/>
<dbReference type="KEGG" id="lbj:LBJ_0528"/>
<dbReference type="HOGENOM" id="CLU_036856_6_0_12"/>
<dbReference type="Proteomes" id="UP000000656">
    <property type="component" value="Chromosome 1"/>
</dbReference>
<dbReference type="GO" id="GO:0005737">
    <property type="term" value="C:cytoplasm"/>
    <property type="evidence" value="ECO:0007669"/>
    <property type="project" value="UniProtKB-SubCell"/>
</dbReference>
<dbReference type="GO" id="GO:0016149">
    <property type="term" value="F:translation release factor activity, codon specific"/>
    <property type="evidence" value="ECO:0007669"/>
    <property type="project" value="UniProtKB-UniRule"/>
</dbReference>
<dbReference type="FunFam" id="3.30.160.20:FF:000010">
    <property type="entry name" value="Peptide chain release factor 2"/>
    <property type="match status" value="1"/>
</dbReference>
<dbReference type="Gene3D" id="3.30.160.20">
    <property type="match status" value="1"/>
</dbReference>
<dbReference type="Gene3D" id="3.30.70.1660">
    <property type="match status" value="1"/>
</dbReference>
<dbReference type="Gene3D" id="1.20.58.410">
    <property type="entry name" value="Release factor"/>
    <property type="match status" value="1"/>
</dbReference>
<dbReference type="HAMAP" id="MF_00094">
    <property type="entry name" value="Rel_fac_2"/>
    <property type="match status" value="1"/>
</dbReference>
<dbReference type="InterPro" id="IPR005139">
    <property type="entry name" value="PCRF"/>
</dbReference>
<dbReference type="InterPro" id="IPR000352">
    <property type="entry name" value="Pep_chain_release_fac_I"/>
</dbReference>
<dbReference type="InterPro" id="IPR045853">
    <property type="entry name" value="Pep_chain_release_fac_I_sf"/>
</dbReference>
<dbReference type="InterPro" id="IPR004374">
    <property type="entry name" value="PrfB"/>
</dbReference>
<dbReference type="NCBIfam" id="TIGR00020">
    <property type="entry name" value="prfB"/>
    <property type="match status" value="1"/>
</dbReference>
<dbReference type="PANTHER" id="PTHR43116:SF3">
    <property type="entry name" value="CLASS I PEPTIDE CHAIN RELEASE FACTOR"/>
    <property type="match status" value="1"/>
</dbReference>
<dbReference type="PANTHER" id="PTHR43116">
    <property type="entry name" value="PEPTIDE CHAIN RELEASE FACTOR 2"/>
    <property type="match status" value="1"/>
</dbReference>
<dbReference type="Pfam" id="PF03462">
    <property type="entry name" value="PCRF"/>
    <property type="match status" value="1"/>
</dbReference>
<dbReference type="Pfam" id="PF00472">
    <property type="entry name" value="RF-1"/>
    <property type="match status" value="1"/>
</dbReference>
<dbReference type="SMART" id="SM00937">
    <property type="entry name" value="PCRF"/>
    <property type="match status" value="1"/>
</dbReference>
<dbReference type="SUPFAM" id="SSF75620">
    <property type="entry name" value="Release factor"/>
    <property type="match status" value="1"/>
</dbReference>
<dbReference type="PROSITE" id="PS00745">
    <property type="entry name" value="RF_PROK_I"/>
    <property type="match status" value="1"/>
</dbReference>
<reference key="1">
    <citation type="journal article" date="2006" name="Proc. Natl. Acad. Sci. U.S.A.">
        <title>Genome reduction in Leptospira borgpetersenii reflects limited transmission potential.</title>
        <authorList>
            <person name="Bulach D.M."/>
            <person name="Zuerner R.L."/>
            <person name="Wilson P."/>
            <person name="Seemann T."/>
            <person name="McGrath A."/>
            <person name="Cullen P.A."/>
            <person name="Davis J."/>
            <person name="Johnson M."/>
            <person name="Kuczek E."/>
            <person name="Alt D.P."/>
            <person name="Peterson-Burch B."/>
            <person name="Coppel R.L."/>
            <person name="Rood J.I."/>
            <person name="Davies J.K."/>
            <person name="Adler B."/>
        </authorList>
    </citation>
    <scope>NUCLEOTIDE SEQUENCE [LARGE SCALE GENOMIC DNA]</scope>
    <source>
        <strain>JB197</strain>
    </source>
</reference>